<reference key="1">
    <citation type="journal article" date="2008" name="DNA Res.">
        <title>Complete genome sequence and comparative analysis of the wild-type commensal Escherichia coli strain SE11 isolated from a healthy adult.</title>
        <authorList>
            <person name="Oshima K."/>
            <person name="Toh H."/>
            <person name="Ogura Y."/>
            <person name="Sasamoto H."/>
            <person name="Morita H."/>
            <person name="Park S.-H."/>
            <person name="Ooka T."/>
            <person name="Iyoda S."/>
            <person name="Taylor T.D."/>
            <person name="Hayashi T."/>
            <person name="Itoh K."/>
            <person name="Hattori M."/>
        </authorList>
    </citation>
    <scope>NUCLEOTIDE SEQUENCE [LARGE SCALE GENOMIC DNA]</scope>
    <source>
        <strain>SE11</strain>
    </source>
</reference>
<proteinExistence type="inferred from homology"/>
<name>EUTC_ECOSE</name>
<protein>
    <recommendedName>
        <fullName evidence="1">Ethanolamine ammonia-lyase small subunit</fullName>
        <shortName evidence="1">EAL small subunit</shortName>
        <ecNumber evidence="1">4.3.1.7</ecNumber>
    </recommendedName>
</protein>
<comment type="function">
    <text evidence="1">Catalyzes the deamination of various vicinal amino-alcohols to oxo compounds. Allows this organism to utilize ethanolamine as the sole source of nitrogen and carbon in the presence of external vitamin B12.</text>
</comment>
<comment type="catalytic activity">
    <reaction evidence="1">
        <text>ethanolamine = acetaldehyde + NH4(+)</text>
        <dbReference type="Rhea" id="RHEA:15313"/>
        <dbReference type="ChEBI" id="CHEBI:15343"/>
        <dbReference type="ChEBI" id="CHEBI:28938"/>
        <dbReference type="ChEBI" id="CHEBI:57603"/>
        <dbReference type="EC" id="4.3.1.7"/>
    </reaction>
</comment>
<comment type="cofactor">
    <cofactor evidence="1">
        <name>adenosylcob(III)alamin</name>
        <dbReference type="ChEBI" id="CHEBI:18408"/>
    </cofactor>
    <text evidence="1">Binds between the large and small subunits.</text>
</comment>
<comment type="pathway">
    <text evidence="1">Amine and polyamine degradation; ethanolamine degradation.</text>
</comment>
<comment type="subunit">
    <text evidence="1">The basic unit is a heterodimer which dimerizes to form tetramers. The heterotetramers trimerize; 6 large subunits form a core ring with 6 small subunits projecting outwards.</text>
</comment>
<comment type="subcellular location">
    <subcellularLocation>
        <location evidence="1">Bacterial microcompartment</location>
    </subcellularLocation>
</comment>
<comment type="similarity">
    <text evidence="1">Belongs to the EutC family.</text>
</comment>
<gene>
    <name evidence="1" type="primary">eutC</name>
    <name type="ordered locus">ECSE_2730</name>
</gene>
<keyword id="KW-1283">Bacterial microcompartment</keyword>
<keyword id="KW-0846">Cobalamin</keyword>
<keyword id="KW-0170">Cobalt</keyword>
<keyword id="KW-0456">Lyase</keyword>
<feature type="chain" id="PRO_1000130091" description="Ethanolamine ammonia-lyase small subunit">
    <location>
        <begin position="1"/>
        <end position="295"/>
    </location>
</feature>
<feature type="binding site" evidence="1">
    <location>
        <position position="207"/>
    </location>
    <ligand>
        <name>adenosylcob(III)alamin</name>
        <dbReference type="ChEBI" id="CHEBI:18408"/>
    </ligand>
</feature>
<feature type="binding site" evidence="1">
    <location>
        <position position="228"/>
    </location>
    <ligand>
        <name>adenosylcob(III)alamin</name>
        <dbReference type="ChEBI" id="CHEBI:18408"/>
    </ligand>
</feature>
<feature type="binding site" evidence="1">
    <location>
        <position position="258"/>
    </location>
    <ligand>
        <name>adenosylcob(III)alamin</name>
        <dbReference type="ChEBI" id="CHEBI:18408"/>
    </ligand>
</feature>
<sequence length="295" mass="31738">MDQKQIEEIVRSVMASMGQAAPAPSEAKCAATTCAAPVTSESCALDLGSAEAKAWIGVENPHRADVLTELRRSTVARVCTGRAGPRPRTQALLRFLADHSRSKDTVLKEVPEEWVKAQGLLEVRSEISNKNLYLTRPDMGRRLCAEAVEALKAQCVANPDVQVVISDGLSTDAITVNYEEILPPLMAGLKQAGLKVGTPFFVRYGRVKIEDQIGEILGAKVVILLVGERPGLGQSESLSCYAVYSPRMATTVEADRTCISNIHQGGTPPVEAAAVIVDLAKRMLEQKASGINMTR</sequence>
<evidence type="ECO:0000255" key="1">
    <source>
        <dbReference type="HAMAP-Rule" id="MF_00601"/>
    </source>
</evidence>
<accession>B6I516</accession>
<organism>
    <name type="scientific">Escherichia coli (strain SE11)</name>
    <dbReference type="NCBI Taxonomy" id="409438"/>
    <lineage>
        <taxon>Bacteria</taxon>
        <taxon>Pseudomonadati</taxon>
        <taxon>Pseudomonadota</taxon>
        <taxon>Gammaproteobacteria</taxon>
        <taxon>Enterobacterales</taxon>
        <taxon>Enterobacteriaceae</taxon>
        <taxon>Escherichia</taxon>
    </lineage>
</organism>
<dbReference type="EC" id="4.3.1.7" evidence="1"/>
<dbReference type="EMBL" id="AP009240">
    <property type="protein sequence ID" value="BAG78254.1"/>
    <property type="molecule type" value="Genomic_DNA"/>
</dbReference>
<dbReference type="RefSeq" id="WP_000372307.1">
    <property type="nucleotide sequence ID" value="NC_011415.1"/>
</dbReference>
<dbReference type="SMR" id="B6I516"/>
<dbReference type="KEGG" id="ecy:ECSE_2730"/>
<dbReference type="HOGENOM" id="CLU_068224_0_0_6"/>
<dbReference type="UniPathway" id="UPA00560"/>
<dbReference type="Proteomes" id="UP000008199">
    <property type="component" value="Chromosome"/>
</dbReference>
<dbReference type="GO" id="GO:0009350">
    <property type="term" value="C:ethanolamine ammonia-lyase complex"/>
    <property type="evidence" value="ECO:0007669"/>
    <property type="project" value="UniProtKB-UniRule"/>
</dbReference>
<dbReference type="GO" id="GO:0031471">
    <property type="term" value="C:ethanolamine degradation polyhedral organelle"/>
    <property type="evidence" value="ECO:0007669"/>
    <property type="project" value="UniProtKB-UniRule"/>
</dbReference>
<dbReference type="GO" id="GO:0031419">
    <property type="term" value="F:cobalamin binding"/>
    <property type="evidence" value="ECO:0007669"/>
    <property type="project" value="UniProtKB-UniRule"/>
</dbReference>
<dbReference type="GO" id="GO:0008851">
    <property type="term" value="F:ethanolamine ammonia-lyase activity"/>
    <property type="evidence" value="ECO:0007669"/>
    <property type="project" value="UniProtKB-UniRule"/>
</dbReference>
<dbReference type="GO" id="GO:0006520">
    <property type="term" value="P:amino acid metabolic process"/>
    <property type="evidence" value="ECO:0007669"/>
    <property type="project" value="InterPro"/>
</dbReference>
<dbReference type="GO" id="GO:0046336">
    <property type="term" value="P:ethanolamine catabolic process"/>
    <property type="evidence" value="ECO:0007669"/>
    <property type="project" value="UniProtKB-UniRule"/>
</dbReference>
<dbReference type="FunFam" id="3.40.50.11240:FF:000001">
    <property type="entry name" value="Ethanolamine ammonia-lyase light chain"/>
    <property type="match status" value="1"/>
</dbReference>
<dbReference type="Gene3D" id="6.10.140.690">
    <property type="match status" value="1"/>
</dbReference>
<dbReference type="Gene3D" id="6.10.250.2060">
    <property type="match status" value="1"/>
</dbReference>
<dbReference type="Gene3D" id="3.40.50.11240">
    <property type="entry name" value="Ethanolamine ammonia-lyase light chain (EutC)"/>
    <property type="match status" value="1"/>
</dbReference>
<dbReference type="HAMAP" id="MF_00601">
    <property type="entry name" value="EutC"/>
    <property type="match status" value="1"/>
</dbReference>
<dbReference type="InterPro" id="IPR009246">
    <property type="entry name" value="EutC"/>
</dbReference>
<dbReference type="InterPro" id="IPR042251">
    <property type="entry name" value="EutC_C"/>
</dbReference>
<dbReference type="NCBIfam" id="NF003971">
    <property type="entry name" value="PRK05465.1"/>
    <property type="match status" value="1"/>
</dbReference>
<dbReference type="PANTHER" id="PTHR39330">
    <property type="entry name" value="ETHANOLAMINE AMMONIA-LYASE LIGHT CHAIN"/>
    <property type="match status" value="1"/>
</dbReference>
<dbReference type="PANTHER" id="PTHR39330:SF1">
    <property type="entry name" value="ETHANOLAMINE AMMONIA-LYASE SMALL SUBUNIT"/>
    <property type="match status" value="1"/>
</dbReference>
<dbReference type="Pfam" id="PF05985">
    <property type="entry name" value="EutC"/>
    <property type="match status" value="1"/>
</dbReference>
<dbReference type="PIRSF" id="PIRSF018982">
    <property type="entry name" value="EutC"/>
    <property type="match status" value="1"/>
</dbReference>